<organism>
    <name type="scientific">Staphylococcus epidermidis (strain ATCC 12228 / FDA PCI 1200)</name>
    <dbReference type="NCBI Taxonomy" id="176280"/>
    <lineage>
        <taxon>Bacteria</taxon>
        <taxon>Bacillati</taxon>
        <taxon>Bacillota</taxon>
        <taxon>Bacilli</taxon>
        <taxon>Bacillales</taxon>
        <taxon>Staphylococcaceae</taxon>
        <taxon>Staphylococcus</taxon>
    </lineage>
</organism>
<feature type="chain" id="PRO_0000151361" description="Ketol-acid reductoisomerase (NADP(+))">
    <location>
        <begin position="1"/>
        <end position="334"/>
    </location>
</feature>
<feature type="domain" description="KARI N-terminal Rossmann" evidence="2">
    <location>
        <begin position="2"/>
        <end position="181"/>
    </location>
</feature>
<feature type="domain" description="KARI C-terminal knotted" evidence="3">
    <location>
        <begin position="182"/>
        <end position="327"/>
    </location>
</feature>
<feature type="active site" evidence="1">
    <location>
        <position position="107"/>
    </location>
</feature>
<feature type="binding site" evidence="1">
    <location>
        <begin position="25"/>
        <end position="28"/>
    </location>
    <ligand>
        <name>NADP(+)</name>
        <dbReference type="ChEBI" id="CHEBI:58349"/>
    </ligand>
</feature>
<feature type="binding site" evidence="1">
    <location>
        <position position="48"/>
    </location>
    <ligand>
        <name>NADP(+)</name>
        <dbReference type="ChEBI" id="CHEBI:58349"/>
    </ligand>
</feature>
<feature type="binding site" evidence="1">
    <location>
        <position position="52"/>
    </location>
    <ligand>
        <name>NADP(+)</name>
        <dbReference type="ChEBI" id="CHEBI:58349"/>
    </ligand>
</feature>
<feature type="binding site" evidence="1">
    <location>
        <begin position="82"/>
        <end position="85"/>
    </location>
    <ligand>
        <name>NADP(+)</name>
        <dbReference type="ChEBI" id="CHEBI:58349"/>
    </ligand>
</feature>
<feature type="binding site" evidence="1">
    <location>
        <position position="133"/>
    </location>
    <ligand>
        <name>NADP(+)</name>
        <dbReference type="ChEBI" id="CHEBI:58349"/>
    </ligand>
</feature>
<feature type="binding site" evidence="1">
    <location>
        <position position="190"/>
    </location>
    <ligand>
        <name>Mg(2+)</name>
        <dbReference type="ChEBI" id="CHEBI:18420"/>
        <label>1</label>
    </ligand>
</feature>
<feature type="binding site" evidence="1">
    <location>
        <position position="190"/>
    </location>
    <ligand>
        <name>Mg(2+)</name>
        <dbReference type="ChEBI" id="CHEBI:18420"/>
        <label>2</label>
    </ligand>
</feature>
<feature type="binding site" evidence="1">
    <location>
        <position position="194"/>
    </location>
    <ligand>
        <name>Mg(2+)</name>
        <dbReference type="ChEBI" id="CHEBI:18420"/>
        <label>1</label>
    </ligand>
</feature>
<feature type="binding site" evidence="1">
    <location>
        <position position="226"/>
    </location>
    <ligand>
        <name>Mg(2+)</name>
        <dbReference type="ChEBI" id="CHEBI:18420"/>
        <label>2</label>
    </ligand>
</feature>
<feature type="binding site" evidence="1">
    <location>
        <position position="230"/>
    </location>
    <ligand>
        <name>Mg(2+)</name>
        <dbReference type="ChEBI" id="CHEBI:18420"/>
        <label>2</label>
    </ligand>
</feature>
<feature type="binding site" evidence="1">
    <location>
        <position position="251"/>
    </location>
    <ligand>
        <name>substrate</name>
    </ligand>
</feature>
<gene>
    <name evidence="1" type="primary">ilvC</name>
    <name type="ordered locus">SE_1657</name>
</gene>
<name>ILVC_STAES</name>
<protein>
    <recommendedName>
        <fullName evidence="1">Ketol-acid reductoisomerase (NADP(+))</fullName>
        <shortName evidence="1">KARI</shortName>
        <ecNumber evidence="1">1.1.1.86</ecNumber>
    </recommendedName>
    <alternativeName>
        <fullName evidence="1">Acetohydroxy-acid isomeroreductase</fullName>
        <shortName evidence="1">AHIR</shortName>
    </alternativeName>
    <alternativeName>
        <fullName evidence="1">Alpha-keto-beta-hydroxylacyl reductoisomerase</fullName>
    </alternativeName>
    <alternativeName>
        <fullName evidence="1">Ketol-acid reductoisomerase type 1</fullName>
    </alternativeName>
    <alternativeName>
        <fullName evidence="1">Ketol-acid reductoisomerase type I</fullName>
    </alternativeName>
</protein>
<accession>Q8CRQ6</accession>
<keyword id="KW-0028">Amino-acid biosynthesis</keyword>
<keyword id="KW-0100">Branched-chain amino acid biosynthesis</keyword>
<keyword id="KW-0460">Magnesium</keyword>
<keyword id="KW-0479">Metal-binding</keyword>
<keyword id="KW-0521">NADP</keyword>
<keyword id="KW-0560">Oxidoreductase</keyword>
<comment type="function">
    <text evidence="1">Involved in the biosynthesis of branched-chain amino acids (BCAA). Catalyzes an alkyl-migration followed by a ketol-acid reduction of (S)-2-acetolactate (S2AL) to yield (R)-2,3-dihydroxy-isovalerate. In the isomerase reaction, S2AL is rearranged via a Mg-dependent methyl migration to produce 3-hydroxy-3-methyl-2-ketobutyrate (HMKB). In the reductase reaction, this 2-ketoacid undergoes a metal-dependent reduction by NADPH to yield (R)-2,3-dihydroxy-isovalerate.</text>
</comment>
<comment type="catalytic activity">
    <reaction evidence="1">
        <text>(2R)-2,3-dihydroxy-3-methylbutanoate + NADP(+) = (2S)-2-acetolactate + NADPH + H(+)</text>
        <dbReference type="Rhea" id="RHEA:22068"/>
        <dbReference type="ChEBI" id="CHEBI:15378"/>
        <dbReference type="ChEBI" id="CHEBI:49072"/>
        <dbReference type="ChEBI" id="CHEBI:57783"/>
        <dbReference type="ChEBI" id="CHEBI:58349"/>
        <dbReference type="ChEBI" id="CHEBI:58476"/>
        <dbReference type="EC" id="1.1.1.86"/>
    </reaction>
</comment>
<comment type="catalytic activity">
    <reaction evidence="1">
        <text>(2R,3R)-2,3-dihydroxy-3-methylpentanoate + NADP(+) = (S)-2-ethyl-2-hydroxy-3-oxobutanoate + NADPH + H(+)</text>
        <dbReference type="Rhea" id="RHEA:13493"/>
        <dbReference type="ChEBI" id="CHEBI:15378"/>
        <dbReference type="ChEBI" id="CHEBI:49256"/>
        <dbReference type="ChEBI" id="CHEBI:49258"/>
        <dbReference type="ChEBI" id="CHEBI:57783"/>
        <dbReference type="ChEBI" id="CHEBI:58349"/>
        <dbReference type="EC" id="1.1.1.86"/>
    </reaction>
</comment>
<comment type="cofactor">
    <cofactor evidence="1">
        <name>Mg(2+)</name>
        <dbReference type="ChEBI" id="CHEBI:18420"/>
    </cofactor>
    <text evidence="1">Binds 2 magnesium ions per subunit.</text>
</comment>
<comment type="pathway">
    <text evidence="1">Amino-acid biosynthesis; L-isoleucine biosynthesis; L-isoleucine from 2-oxobutanoate: step 2/4.</text>
</comment>
<comment type="pathway">
    <text evidence="1">Amino-acid biosynthesis; L-valine biosynthesis; L-valine from pyruvate: step 2/4.</text>
</comment>
<comment type="similarity">
    <text evidence="1">Belongs to the ketol-acid reductoisomerase family.</text>
</comment>
<reference key="1">
    <citation type="journal article" date="2003" name="Mol. Microbiol.">
        <title>Genome-based analysis of virulence genes in a non-biofilm-forming Staphylococcus epidermidis strain (ATCC 12228).</title>
        <authorList>
            <person name="Zhang Y.-Q."/>
            <person name="Ren S.-X."/>
            <person name="Li H.-L."/>
            <person name="Wang Y.-X."/>
            <person name="Fu G."/>
            <person name="Yang J."/>
            <person name="Qin Z.-Q."/>
            <person name="Miao Y.-G."/>
            <person name="Wang W.-Y."/>
            <person name="Chen R.-S."/>
            <person name="Shen Y."/>
            <person name="Chen Z."/>
            <person name="Yuan Z.-H."/>
            <person name="Zhao G.-P."/>
            <person name="Qu D."/>
            <person name="Danchin A."/>
            <person name="Wen Y.-M."/>
        </authorList>
    </citation>
    <scope>NUCLEOTIDE SEQUENCE [LARGE SCALE GENOMIC DNA]</scope>
    <source>
        <strain>ATCC 12228 / FDA PCI 1200</strain>
    </source>
</reference>
<evidence type="ECO:0000255" key="1">
    <source>
        <dbReference type="HAMAP-Rule" id="MF_00435"/>
    </source>
</evidence>
<evidence type="ECO:0000255" key="2">
    <source>
        <dbReference type="PROSITE-ProRule" id="PRU01197"/>
    </source>
</evidence>
<evidence type="ECO:0000255" key="3">
    <source>
        <dbReference type="PROSITE-ProRule" id="PRU01198"/>
    </source>
</evidence>
<sequence length="334" mass="37176">MTKVYYDETVTQDALQGKKIAVIGYGSQGHAHAQNLKDNGYDVVIGLRPGRSFNKAKEDGFDVYTVSEATQQADVVMVLLPDEIQGEVYNKEIKPYLEKGNALAFAHGFNIHFSVIEPPSDVDVFLVAPKGPGHLVRRTFVEGSAVPALFGVQQDATGQARNIALSYAKGIGATRAGVIETTFKEETETDLFGEQAVLCGGVSKLIQSGFETLVEAGYQPELAYFEVLHEMKLIVDLMYEGGMENVRYSISNTAEFGDYVSGPRVITPNVKENMKKVLEDIQNGNFSRRFVEDNKNGFKEFYQLREDQHGHQIEQVGRELREMMPFIKSKSIEK</sequence>
<proteinExistence type="inferred from homology"/>
<dbReference type="EC" id="1.1.1.86" evidence="1"/>
<dbReference type="EMBL" id="AE015929">
    <property type="protein sequence ID" value="AAO05256.1"/>
    <property type="molecule type" value="Genomic_DNA"/>
</dbReference>
<dbReference type="RefSeq" id="NP_765212.1">
    <property type="nucleotide sequence ID" value="NC_004461.1"/>
</dbReference>
<dbReference type="RefSeq" id="WP_001830020.1">
    <property type="nucleotide sequence ID" value="NZ_WBME01000022.1"/>
</dbReference>
<dbReference type="SMR" id="Q8CRQ6"/>
<dbReference type="GeneID" id="50018244"/>
<dbReference type="KEGG" id="sep:SE_1657"/>
<dbReference type="PATRIC" id="fig|176280.10.peg.1621"/>
<dbReference type="eggNOG" id="COG0059">
    <property type="taxonomic scope" value="Bacteria"/>
</dbReference>
<dbReference type="HOGENOM" id="CLU_033821_0_1_9"/>
<dbReference type="OrthoDB" id="9804088at2"/>
<dbReference type="UniPathway" id="UPA00047">
    <property type="reaction ID" value="UER00056"/>
</dbReference>
<dbReference type="UniPathway" id="UPA00049">
    <property type="reaction ID" value="UER00060"/>
</dbReference>
<dbReference type="Proteomes" id="UP000001411">
    <property type="component" value="Chromosome"/>
</dbReference>
<dbReference type="GO" id="GO:0005829">
    <property type="term" value="C:cytosol"/>
    <property type="evidence" value="ECO:0007669"/>
    <property type="project" value="TreeGrafter"/>
</dbReference>
<dbReference type="GO" id="GO:0004455">
    <property type="term" value="F:ketol-acid reductoisomerase activity"/>
    <property type="evidence" value="ECO:0007669"/>
    <property type="project" value="UniProtKB-UniRule"/>
</dbReference>
<dbReference type="GO" id="GO:0000287">
    <property type="term" value="F:magnesium ion binding"/>
    <property type="evidence" value="ECO:0007669"/>
    <property type="project" value="UniProtKB-UniRule"/>
</dbReference>
<dbReference type="GO" id="GO:0050661">
    <property type="term" value="F:NADP binding"/>
    <property type="evidence" value="ECO:0007669"/>
    <property type="project" value="InterPro"/>
</dbReference>
<dbReference type="GO" id="GO:0009097">
    <property type="term" value="P:isoleucine biosynthetic process"/>
    <property type="evidence" value="ECO:0007669"/>
    <property type="project" value="UniProtKB-UniRule"/>
</dbReference>
<dbReference type="GO" id="GO:0009099">
    <property type="term" value="P:L-valine biosynthetic process"/>
    <property type="evidence" value="ECO:0007669"/>
    <property type="project" value="UniProtKB-UniRule"/>
</dbReference>
<dbReference type="FunFam" id="3.40.50.720:FF:000023">
    <property type="entry name" value="Ketol-acid reductoisomerase (NADP(+))"/>
    <property type="match status" value="1"/>
</dbReference>
<dbReference type="Gene3D" id="6.10.240.10">
    <property type="match status" value="1"/>
</dbReference>
<dbReference type="Gene3D" id="3.40.50.720">
    <property type="entry name" value="NAD(P)-binding Rossmann-like Domain"/>
    <property type="match status" value="1"/>
</dbReference>
<dbReference type="HAMAP" id="MF_00435">
    <property type="entry name" value="IlvC"/>
    <property type="match status" value="1"/>
</dbReference>
<dbReference type="InterPro" id="IPR008927">
    <property type="entry name" value="6-PGluconate_DH-like_C_sf"/>
</dbReference>
<dbReference type="InterPro" id="IPR013023">
    <property type="entry name" value="KARI"/>
</dbReference>
<dbReference type="InterPro" id="IPR000506">
    <property type="entry name" value="KARI_C"/>
</dbReference>
<dbReference type="InterPro" id="IPR013116">
    <property type="entry name" value="KARI_N"/>
</dbReference>
<dbReference type="InterPro" id="IPR014359">
    <property type="entry name" value="KARI_prok"/>
</dbReference>
<dbReference type="InterPro" id="IPR036291">
    <property type="entry name" value="NAD(P)-bd_dom_sf"/>
</dbReference>
<dbReference type="NCBIfam" id="TIGR00465">
    <property type="entry name" value="ilvC"/>
    <property type="match status" value="1"/>
</dbReference>
<dbReference type="NCBIfam" id="NF004017">
    <property type="entry name" value="PRK05479.1"/>
    <property type="match status" value="1"/>
</dbReference>
<dbReference type="NCBIfam" id="NF009940">
    <property type="entry name" value="PRK13403.1"/>
    <property type="match status" value="1"/>
</dbReference>
<dbReference type="PANTHER" id="PTHR21371">
    <property type="entry name" value="KETOL-ACID REDUCTOISOMERASE, MITOCHONDRIAL"/>
    <property type="match status" value="1"/>
</dbReference>
<dbReference type="PANTHER" id="PTHR21371:SF1">
    <property type="entry name" value="KETOL-ACID REDUCTOISOMERASE, MITOCHONDRIAL"/>
    <property type="match status" value="1"/>
</dbReference>
<dbReference type="Pfam" id="PF01450">
    <property type="entry name" value="KARI_C"/>
    <property type="match status" value="1"/>
</dbReference>
<dbReference type="Pfam" id="PF07991">
    <property type="entry name" value="KARI_N"/>
    <property type="match status" value="1"/>
</dbReference>
<dbReference type="PIRSF" id="PIRSF000116">
    <property type="entry name" value="IlvC_gammaproteo"/>
    <property type="match status" value="1"/>
</dbReference>
<dbReference type="SUPFAM" id="SSF48179">
    <property type="entry name" value="6-phosphogluconate dehydrogenase C-terminal domain-like"/>
    <property type="match status" value="1"/>
</dbReference>
<dbReference type="SUPFAM" id="SSF51735">
    <property type="entry name" value="NAD(P)-binding Rossmann-fold domains"/>
    <property type="match status" value="1"/>
</dbReference>
<dbReference type="PROSITE" id="PS51851">
    <property type="entry name" value="KARI_C"/>
    <property type="match status" value="1"/>
</dbReference>
<dbReference type="PROSITE" id="PS51850">
    <property type="entry name" value="KARI_N"/>
    <property type="match status" value="1"/>
</dbReference>